<dbReference type="EC" id="2.3.1.181" evidence="1"/>
<dbReference type="EMBL" id="CP000503">
    <property type="protein sequence ID" value="ABM23878.1"/>
    <property type="molecule type" value="Genomic_DNA"/>
</dbReference>
<dbReference type="RefSeq" id="WP_011788403.1">
    <property type="nucleotide sequence ID" value="NC_008750.1"/>
</dbReference>
<dbReference type="SMR" id="A1RGT3"/>
<dbReference type="GeneID" id="67444497"/>
<dbReference type="KEGG" id="shw:Sputw3181_1028"/>
<dbReference type="HOGENOM" id="CLU_035168_3_1_6"/>
<dbReference type="UniPathway" id="UPA00538">
    <property type="reaction ID" value="UER00592"/>
</dbReference>
<dbReference type="Proteomes" id="UP000002597">
    <property type="component" value="Chromosome"/>
</dbReference>
<dbReference type="GO" id="GO:0005737">
    <property type="term" value="C:cytoplasm"/>
    <property type="evidence" value="ECO:0007669"/>
    <property type="project" value="UniProtKB-SubCell"/>
</dbReference>
<dbReference type="GO" id="GO:0033819">
    <property type="term" value="F:lipoyl(octanoyl) transferase activity"/>
    <property type="evidence" value="ECO:0007669"/>
    <property type="project" value="UniProtKB-EC"/>
</dbReference>
<dbReference type="GO" id="GO:0036211">
    <property type="term" value="P:protein modification process"/>
    <property type="evidence" value="ECO:0007669"/>
    <property type="project" value="InterPro"/>
</dbReference>
<dbReference type="CDD" id="cd16444">
    <property type="entry name" value="LipB"/>
    <property type="match status" value="1"/>
</dbReference>
<dbReference type="FunFam" id="3.30.930.10:FF:000020">
    <property type="entry name" value="Octanoyltransferase"/>
    <property type="match status" value="1"/>
</dbReference>
<dbReference type="Gene3D" id="3.30.930.10">
    <property type="entry name" value="Bira Bifunctional Protein, Domain 2"/>
    <property type="match status" value="1"/>
</dbReference>
<dbReference type="HAMAP" id="MF_00013">
    <property type="entry name" value="LipB"/>
    <property type="match status" value="1"/>
</dbReference>
<dbReference type="InterPro" id="IPR045864">
    <property type="entry name" value="aa-tRNA-synth_II/BPL/LPL"/>
</dbReference>
<dbReference type="InterPro" id="IPR004143">
    <property type="entry name" value="BPL_LPL_catalytic"/>
</dbReference>
<dbReference type="InterPro" id="IPR000544">
    <property type="entry name" value="Octanoyltransferase"/>
</dbReference>
<dbReference type="InterPro" id="IPR020605">
    <property type="entry name" value="Octanoyltransferase_CS"/>
</dbReference>
<dbReference type="NCBIfam" id="TIGR00214">
    <property type="entry name" value="lipB"/>
    <property type="match status" value="1"/>
</dbReference>
<dbReference type="NCBIfam" id="NF010922">
    <property type="entry name" value="PRK14342.1"/>
    <property type="match status" value="1"/>
</dbReference>
<dbReference type="PANTHER" id="PTHR10993:SF7">
    <property type="entry name" value="LIPOYLTRANSFERASE 2, MITOCHONDRIAL-RELATED"/>
    <property type="match status" value="1"/>
</dbReference>
<dbReference type="PANTHER" id="PTHR10993">
    <property type="entry name" value="OCTANOYLTRANSFERASE"/>
    <property type="match status" value="1"/>
</dbReference>
<dbReference type="Pfam" id="PF21948">
    <property type="entry name" value="LplA-B_cat"/>
    <property type="match status" value="1"/>
</dbReference>
<dbReference type="PIRSF" id="PIRSF016262">
    <property type="entry name" value="LPLase"/>
    <property type="match status" value="1"/>
</dbReference>
<dbReference type="SUPFAM" id="SSF55681">
    <property type="entry name" value="Class II aaRS and biotin synthetases"/>
    <property type="match status" value="1"/>
</dbReference>
<dbReference type="PROSITE" id="PS51733">
    <property type="entry name" value="BPL_LPL_CATALYTIC"/>
    <property type="match status" value="1"/>
</dbReference>
<dbReference type="PROSITE" id="PS01313">
    <property type="entry name" value="LIPB"/>
    <property type="match status" value="1"/>
</dbReference>
<organism>
    <name type="scientific">Shewanella sp. (strain W3-18-1)</name>
    <dbReference type="NCBI Taxonomy" id="351745"/>
    <lineage>
        <taxon>Bacteria</taxon>
        <taxon>Pseudomonadati</taxon>
        <taxon>Pseudomonadota</taxon>
        <taxon>Gammaproteobacteria</taxon>
        <taxon>Alteromonadales</taxon>
        <taxon>Shewanellaceae</taxon>
        <taxon>Shewanella</taxon>
    </lineage>
</organism>
<proteinExistence type="inferred from homology"/>
<sequence length="217" mass="24098">MQDTTLHIRHLGKQDYESVWHAMQHYTDTRNSESPDELWIVEHPPVFTQGQAGKSEHILNAGDIPVIQVDRGGQVTYHGPGQLVVYPLIDIKRSKIGVRQLVTHIEQSIINMLAKYDIQAYAKADAPGVYVNERKIASLGLRIRRGCSFHGLALNVDMDLAPFRRINPCGYAGLEMVQSKALGGPQTVTEAGEQLTITFSQLLGYQHLVHHQGLAAS</sequence>
<name>LIPB_SHESW</name>
<gene>
    <name evidence="1" type="primary">lipB</name>
    <name type="ordered locus">Sputw3181_1028</name>
</gene>
<protein>
    <recommendedName>
        <fullName evidence="1">Octanoyltransferase</fullName>
        <ecNumber evidence="1">2.3.1.181</ecNumber>
    </recommendedName>
    <alternativeName>
        <fullName evidence="1">Lipoate-protein ligase B</fullName>
    </alternativeName>
    <alternativeName>
        <fullName evidence="1">Lipoyl/octanoyl transferase</fullName>
    </alternativeName>
    <alternativeName>
        <fullName evidence="1">Octanoyl-[acyl-carrier-protein]-protein N-octanoyltransferase</fullName>
    </alternativeName>
</protein>
<accession>A1RGT3</accession>
<reference key="1">
    <citation type="submission" date="2006-12" db="EMBL/GenBank/DDBJ databases">
        <title>Complete sequence of Shewanella sp. W3-18-1.</title>
        <authorList>
            <consortium name="US DOE Joint Genome Institute"/>
            <person name="Copeland A."/>
            <person name="Lucas S."/>
            <person name="Lapidus A."/>
            <person name="Barry K."/>
            <person name="Detter J.C."/>
            <person name="Glavina del Rio T."/>
            <person name="Hammon N."/>
            <person name="Israni S."/>
            <person name="Dalin E."/>
            <person name="Tice H."/>
            <person name="Pitluck S."/>
            <person name="Chain P."/>
            <person name="Malfatti S."/>
            <person name="Shin M."/>
            <person name="Vergez L."/>
            <person name="Schmutz J."/>
            <person name="Larimer F."/>
            <person name="Land M."/>
            <person name="Hauser L."/>
            <person name="Kyrpides N."/>
            <person name="Lykidis A."/>
            <person name="Tiedje J."/>
            <person name="Richardson P."/>
        </authorList>
    </citation>
    <scope>NUCLEOTIDE SEQUENCE [LARGE SCALE GENOMIC DNA]</scope>
    <source>
        <strain>W3-18-1</strain>
    </source>
</reference>
<keyword id="KW-0012">Acyltransferase</keyword>
<keyword id="KW-0963">Cytoplasm</keyword>
<keyword id="KW-0808">Transferase</keyword>
<evidence type="ECO:0000255" key="1">
    <source>
        <dbReference type="HAMAP-Rule" id="MF_00013"/>
    </source>
</evidence>
<evidence type="ECO:0000255" key="2">
    <source>
        <dbReference type="PROSITE-ProRule" id="PRU01067"/>
    </source>
</evidence>
<feature type="chain" id="PRO_1000001135" description="Octanoyltransferase">
    <location>
        <begin position="1"/>
        <end position="217"/>
    </location>
</feature>
<feature type="domain" description="BPL/LPL catalytic" evidence="2">
    <location>
        <begin position="32"/>
        <end position="207"/>
    </location>
</feature>
<feature type="active site" description="Acyl-thioester intermediate" evidence="1">
    <location>
        <position position="169"/>
    </location>
</feature>
<feature type="binding site" evidence="1">
    <location>
        <begin position="71"/>
        <end position="78"/>
    </location>
    <ligand>
        <name>substrate</name>
    </ligand>
</feature>
<feature type="binding site" evidence="1">
    <location>
        <begin position="138"/>
        <end position="140"/>
    </location>
    <ligand>
        <name>substrate</name>
    </ligand>
</feature>
<feature type="binding site" evidence="1">
    <location>
        <begin position="151"/>
        <end position="153"/>
    </location>
    <ligand>
        <name>substrate</name>
    </ligand>
</feature>
<feature type="site" description="Lowers pKa of active site Cys" evidence="1">
    <location>
        <position position="135"/>
    </location>
</feature>
<comment type="function">
    <text evidence="1">Catalyzes the transfer of endogenously produced octanoic acid from octanoyl-acyl-carrier-protein onto the lipoyl domains of lipoate-dependent enzymes. Lipoyl-ACP can also act as a substrate although octanoyl-ACP is likely to be the physiological substrate.</text>
</comment>
<comment type="catalytic activity">
    <reaction evidence="1">
        <text>octanoyl-[ACP] + L-lysyl-[protein] = N(6)-octanoyl-L-lysyl-[protein] + holo-[ACP] + H(+)</text>
        <dbReference type="Rhea" id="RHEA:17665"/>
        <dbReference type="Rhea" id="RHEA-COMP:9636"/>
        <dbReference type="Rhea" id="RHEA-COMP:9685"/>
        <dbReference type="Rhea" id="RHEA-COMP:9752"/>
        <dbReference type="Rhea" id="RHEA-COMP:9928"/>
        <dbReference type="ChEBI" id="CHEBI:15378"/>
        <dbReference type="ChEBI" id="CHEBI:29969"/>
        <dbReference type="ChEBI" id="CHEBI:64479"/>
        <dbReference type="ChEBI" id="CHEBI:78463"/>
        <dbReference type="ChEBI" id="CHEBI:78809"/>
        <dbReference type="EC" id="2.3.1.181"/>
    </reaction>
</comment>
<comment type="pathway">
    <text evidence="1">Protein modification; protein lipoylation via endogenous pathway; protein N(6)-(lipoyl)lysine from octanoyl-[acyl-carrier-protein]: step 1/2.</text>
</comment>
<comment type="subcellular location">
    <subcellularLocation>
        <location evidence="1">Cytoplasm</location>
    </subcellularLocation>
</comment>
<comment type="miscellaneous">
    <text evidence="1">In the reaction, the free carboxyl group of octanoic acid is attached via an amide linkage to the epsilon-amino group of a specific lysine residue of lipoyl domains of lipoate-dependent enzymes.</text>
</comment>
<comment type="similarity">
    <text evidence="1">Belongs to the LipB family.</text>
</comment>